<proteinExistence type="inferred from homology"/>
<accession>Q81JG8</accession>
<accession>Q6HV25</accession>
<accession>Q6KP99</accession>
<feature type="chain" id="PRO_0000163868" description="tRNA dimethylallyltransferase">
    <location>
        <begin position="1"/>
        <end position="314"/>
    </location>
</feature>
<feature type="region of interest" description="Interaction with substrate tRNA" evidence="1">
    <location>
        <begin position="36"/>
        <end position="39"/>
    </location>
</feature>
<feature type="binding site" evidence="1">
    <location>
        <begin position="11"/>
        <end position="18"/>
    </location>
    <ligand>
        <name>ATP</name>
        <dbReference type="ChEBI" id="CHEBI:30616"/>
    </ligand>
</feature>
<feature type="binding site" evidence="1">
    <location>
        <begin position="13"/>
        <end position="18"/>
    </location>
    <ligand>
        <name>substrate</name>
    </ligand>
</feature>
<feature type="site" description="Interaction with substrate tRNA" evidence="1">
    <location>
        <position position="102"/>
    </location>
</feature>
<feature type="site" description="Interaction with substrate tRNA" evidence="1">
    <location>
        <position position="125"/>
    </location>
</feature>
<evidence type="ECO:0000255" key="1">
    <source>
        <dbReference type="HAMAP-Rule" id="MF_00185"/>
    </source>
</evidence>
<evidence type="ECO:0000305" key="2"/>
<protein>
    <recommendedName>
        <fullName evidence="1">tRNA dimethylallyltransferase</fullName>
        <ecNumber evidence="1">2.5.1.75</ecNumber>
    </recommendedName>
    <alternativeName>
        <fullName evidence="1">Dimethylallyl diphosphate:tRNA dimethylallyltransferase</fullName>
        <shortName evidence="1">DMAPP:tRNA dimethylallyltransferase</shortName>
        <shortName evidence="1">DMATase</shortName>
    </alternativeName>
    <alternativeName>
        <fullName evidence="1">Isopentenyl-diphosphate:tRNA isopentenyltransferase</fullName>
        <shortName evidence="1">IPP transferase</shortName>
        <shortName evidence="1">IPPT</shortName>
        <shortName evidence="1">IPTase</shortName>
    </alternativeName>
</protein>
<comment type="function">
    <text evidence="1">Catalyzes the transfer of a dimethylallyl group onto the adenine at position 37 in tRNAs that read codons beginning with uridine, leading to the formation of N6-(dimethylallyl)adenosine (i(6)A).</text>
</comment>
<comment type="catalytic activity">
    <reaction evidence="1">
        <text>adenosine(37) in tRNA + dimethylallyl diphosphate = N(6)-dimethylallyladenosine(37) in tRNA + diphosphate</text>
        <dbReference type="Rhea" id="RHEA:26482"/>
        <dbReference type="Rhea" id="RHEA-COMP:10162"/>
        <dbReference type="Rhea" id="RHEA-COMP:10375"/>
        <dbReference type="ChEBI" id="CHEBI:33019"/>
        <dbReference type="ChEBI" id="CHEBI:57623"/>
        <dbReference type="ChEBI" id="CHEBI:74411"/>
        <dbReference type="ChEBI" id="CHEBI:74415"/>
        <dbReference type="EC" id="2.5.1.75"/>
    </reaction>
</comment>
<comment type="cofactor">
    <cofactor evidence="1">
        <name>Mg(2+)</name>
        <dbReference type="ChEBI" id="CHEBI:18420"/>
    </cofactor>
</comment>
<comment type="subunit">
    <text evidence="1">Monomer.</text>
</comment>
<comment type="similarity">
    <text evidence="1">Belongs to the IPP transferase family.</text>
</comment>
<comment type="sequence caution" evidence="2">
    <conflict type="erroneous initiation">
        <sequence resource="EMBL-CDS" id="AAT55864"/>
    </conflict>
</comment>
<reference key="1">
    <citation type="journal article" date="2003" name="Nature">
        <title>The genome sequence of Bacillus anthracis Ames and comparison to closely related bacteria.</title>
        <authorList>
            <person name="Read T.D."/>
            <person name="Peterson S.N."/>
            <person name="Tourasse N.J."/>
            <person name="Baillie L.W."/>
            <person name="Paulsen I.T."/>
            <person name="Nelson K.E."/>
            <person name="Tettelin H."/>
            <person name="Fouts D.E."/>
            <person name="Eisen J.A."/>
            <person name="Gill S.R."/>
            <person name="Holtzapple E.K."/>
            <person name="Okstad O.A."/>
            <person name="Helgason E."/>
            <person name="Rilstone J."/>
            <person name="Wu M."/>
            <person name="Kolonay J.F."/>
            <person name="Beanan M.J."/>
            <person name="Dodson R.J."/>
            <person name="Brinkac L.M."/>
            <person name="Gwinn M.L."/>
            <person name="DeBoy R.T."/>
            <person name="Madpu R."/>
            <person name="Daugherty S.C."/>
            <person name="Durkin A.S."/>
            <person name="Haft D.H."/>
            <person name="Nelson W.C."/>
            <person name="Peterson J.D."/>
            <person name="Pop M."/>
            <person name="Khouri H.M."/>
            <person name="Radune D."/>
            <person name="Benton J.L."/>
            <person name="Mahamoud Y."/>
            <person name="Jiang L."/>
            <person name="Hance I.R."/>
            <person name="Weidman J.F."/>
            <person name="Berry K.J."/>
            <person name="Plaut R.D."/>
            <person name="Wolf A.M."/>
            <person name="Watkins K.L."/>
            <person name="Nierman W.C."/>
            <person name="Hazen A."/>
            <person name="Cline R.T."/>
            <person name="Redmond C."/>
            <person name="Thwaite J.E."/>
            <person name="White O."/>
            <person name="Salzberg S.L."/>
            <person name="Thomason B."/>
            <person name="Friedlander A.M."/>
            <person name="Koehler T.M."/>
            <person name="Hanna P.C."/>
            <person name="Kolstoe A.-B."/>
            <person name="Fraser C.M."/>
        </authorList>
    </citation>
    <scope>NUCLEOTIDE SEQUENCE [LARGE SCALE GENOMIC DNA]</scope>
    <source>
        <strain>Ames / isolate Porton</strain>
    </source>
</reference>
<reference key="2">
    <citation type="journal article" date="2009" name="J. Bacteriol.">
        <title>The complete genome sequence of Bacillus anthracis Ames 'Ancestor'.</title>
        <authorList>
            <person name="Ravel J."/>
            <person name="Jiang L."/>
            <person name="Stanley S.T."/>
            <person name="Wilson M.R."/>
            <person name="Decker R.S."/>
            <person name="Read T.D."/>
            <person name="Worsham P."/>
            <person name="Keim P.S."/>
            <person name="Salzberg S.L."/>
            <person name="Fraser-Liggett C.M."/>
            <person name="Rasko D.A."/>
        </authorList>
    </citation>
    <scope>NUCLEOTIDE SEQUENCE [LARGE SCALE GENOMIC DNA]</scope>
    <source>
        <strain>Ames ancestor</strain>
    </source>
</reference>
<reference key="3">
    <citation type="submission" date="2004-01" db="EMBL/GenBank/DDBJ databases">
        <title>Complete genome sequence of Bacillus anthracis Sterne.</title>
        <authorList>
            <person name="Brettin T.S."/>
            <person name="Bruce D."/>
            <person name="Challacombe J.F."/>
            <person name="Gilna P."/>
            <person name="Han C."/>
            <person name="Hill K."/>
            <person name="Hitchcock P."/>
            <person name="Jackson P."/>
            <person name="Keim P."/>
            <person name="Longmire J."/>
            <person name="Lucas S."/>
            <person name="Okinaka R."/>
            <person name="Richardson P."/>
            <person name="Rubin E."/>
            <person name="Tice H."/>
        </authorList>
    </citation>
    <scope>NUCLEOTIDE SEQUENCE [LARGE SCALE GENOMIC DNA]</scope>
    <source>
        <strain>Sterne</strain>
    </source>
</reference>
<name>MIAA_BACAN</name>
<sequence length="314" mass="36366">MQREKVAVIIGPTAVGKTKLSIDLAKALNGEIISGDSMQIYRTMDIGTAKVTKEEMDGIPHYMVDIKNPEESFSVAEFQERVRKHIREITERGKLPIIVGGTGLYIQSVLFDYQFTDDAGDAIYREQMEKLALERGVEYVHKKLQEVDPESAERIHANNVRRVIRALEIFHTSGEKMSDQLEKQENELLYDVSLIGLTMDREMLYDRINLRVDIMMDQGLLEEVEGLYNRGIRDCQSIQAIGYKEIYDYFEDRVSLEEAVSQLKTNSRRYAKRQLTWFRNKMDVTWFDVTDGEKTSEILRYIEGKLQLKSNNSK</sequence>
<gene>
    <name evidence="1" type="primary">miaA</name>
    <name type="ordered locus">BA_3843</name>
    <name type="ordered locus">GBAA_3843</name>
    <name type="ordered locus">BAS3560</name>
</gene>
<keyword id="KW-0067">ATP-binding</keyword>
<keyword id="KW-0460">Magnesium</keyword>
<keyword id="KW-0547">Nucleotide-binding</keyword>
<keyword id="KW-1185">Reference proteome</keyword>
<keyword id="KW-0808">Transferase</keyword>
<keyword id="KW-0819">tRNA processing</keyword>
<dbReference type="EC" id="2.5.1.75" evidence="1"/>
<dbReference type="EMBL" id="AE016879">
    <property type="protein sequence ID" value="AAP27580.1"/>
    <property type="molecule type" value="Genomic_DNA"/>
</dbReference>
<dbReference type="EMBL" id="AE017334">
    <property type="protein sequence ID" value="AAT32954.2"/>
    <property type="molecule type" value="Genomic_DNA"/>
</dbReference>
<dbReference type="EMBL" id="AE017225">
    <property type="protein sequence ID" value="AAT55864.1"/>
    <property type="status" value="ALT_INIT"/>
    <property type="molecule type" value="Genomic_DNA"/>
</dbReference>
<dbReference type="RefSeq" id="NP_846094.1">
    <property type="nucleotide sequence ID" value="NC_003997.3"/>
</dbReference>
<dbReference type="SMR" id="Q81JG8"/>
<dbReference type="STRING" id="261594.GBAA_3843"/>
<dbReference type="DNASU" id="1085280"/>
<dbReference type="KEGG" id="ban:BA_3843"/>
<dbReference type="KEGG" id="bar:GBAA_3843"/>
<dbReference type="KEGG" id="bat:BAS3560"/>
<dbReference type="PATRIC" id="fig|198094.11.peg.3811"/>
<dbReference type="eggNOG" id="COG0324">
    <property type="taxonomic scope" value="Bacteria"/>
</dbReference>
<dbReference type="HOGENOM" id="CLU_032616_0_1_9"/>
<dbReference type="Proteomes" id="UP000000427">
    <property type="component" value="Chromosome"/>
</dbReference>
<dbReference type="Proteomes" id="UP000000594">
    <property type="component" value="Chromosome"/>
</dbReference>
<dbReference type="GO" id="GO:0005524">
    <property type="term" value="F:ATP binding"/>
    <property type="evidence" value="ECO:0007669"/>
    <property type="project" value="UniProtKB-UniRule"/>
</dbReference>
<dbReference type="GO" id="GO:0052381">
    <property type="term" value="F:tRNA dimethylallyltransferase activity"/>
    <property type="evidence" value="ECO:0007669"/>
    <property type="project" value="UniProtKB-UniRule"/>
</dbReference>
<dbReference type="GO" id="GO:0006400">
    <property type="term" value="P:tRNA modification"/>
    <property type="evidence" value="ECO:0007669"/>
    <property type="project" value="TreeGrafter"/>
</dbReference>
<dbReference type="FunFam" id="1.10.20.140:FF:000001">
    <property type="entry name" value="tRNA dimethylallyltransferase"/>
    <property type="match status" value="1"/>
</dbReference>
<dbReference type="Gene3D" id="1.10.20.140">
    <property type="match status" value="1"/>
</dbReference>
<dbReference type="Gene3D" id="3.40.50.300">
    <property type="entry name" value="P-loop containing nucleotide triphosphate hydrolases"/>
    <property type="match status" value="1"/>
</dbReference>
<dbReference type="HAMAP" id="MF_00185">
    <property type="entry name" value="IPP_trans"/>
    <property type="match status" value="1"/>
</dbReference>
<dbReference type="InterPro" id="IPR039657">
    <property type="entry name" value="Dimethylallyltransferase"/>
</dbReference>
<dbReference type="InterPro" id="IPR018022">
    <property type="entry name" value="IPT"/>
</dbReference>
<dbReference type="InterPro" id="IPR027417">
    <property type="entry name" value="P-loop_NTPase"/>
</dbReference>
<dbReference type="NCBIfam" id="TIGR00174">
    <property type="entry name" value="miaA"/>
    <property type="match status" value="1"/>
</dbReference>
<dbReference type="PANTHER" id="PTHR11088">
    <property type="entry name" value="TRNA DIMETHYLALLYLTRANSFERASE"/>
    <property type="match status" value="1"/>
</dbReference>
<dbReference type="PANTHER" id="PTHR11088:SF60">
    <property type="entry name" value="TRNA DIMETHYLALLYLTRANSFERASE"/>
    <property type="match status" value="1"/>
</dbReference>
<dbReference type="Pfam" id="PF01715">
    <property type="entry name" value="IPPT"/>
    <property type="match status" value="1"/>
</dbReference>
<dbReference type="SUPFAM" id="SSF52540">
    <property type="entry name" value="P-loop containing nucleoside triphosphate hydrolases"/>
    <property type="match status" value="2"/>
</dbReference>
<organism>
    <name type="scientific">Bacillus anthracis</name>
    <dbReference type="NCBI Taxonomy" id="1392"/>
    <lineage>
        <taxon>Bacteria</taxon>
        <taxon>Bacillati</taxon>
        <taxon>Bacillota</taxon>
        <taxon>Bacilli</taxon>
        <taxon>Bacillales</taxon>
        <taxon>Bacillaceae</taxon>
        <taxon>Bacillus</taxon>
        <taxon>Bacillus cereus group</taxon>
    </lineage>
</organism>